<name>ARGB_BIFA0</name>
<proteinExistence type="inferred from homology"/>
<evidence type="ECO:0000255" key="1">
    <source>
        <dbReference type="HAMAP-Rule" id="MF_00082"/>
    </source>
</evidence>
<dbReference type="EC" id="2.7.2.8" evidence="1"/>
<dbReference type="EMBL" id="CP001213">
    <property type="protein sequence ID" value="ACL29535.1"/>
    <property type="molecule type" value="Genomic_DNA"/>
</dbReference>
<dbReference type="SMR" id="B8DU56"/>
<dbReference type="STRING" id="442563.BLA_1247"/>
<dbReference type="KEGG" id="bla:BLA_1247"/>
<dbReference type="HOGENOM" id="CLU_053680_0_1_11"/>
<dbReference type="UniPathway" id="UPA00068">
    <property type="reaction ID" value="UER00107"/>
</dbReference>
<dbReference type="Proteomes" id="UP000002456">
    <property type="component" value="Chromosome"/>
</dbReference>
<dbReference type="GO" id="GO:0005737">
    <property type="term" value="C:cytoplasm"/>
    <property type="evidence" value="ECO:0007669"/>
    <property type="project" value="UniProtKB-SubCell"/>
</dbReference>
<dbReference type="GO" id="GO:0003991">
    <property type="term" value="F:acetylglutamate kinase activity"/>
    <property type="evidence" value="ECO:0007669"/>
    <property type="project" value="UniProtKB-UniRule"/>
</dbReference>
<dbReference type="GO" id="GO:0005524">
    <property type="term" value="F:ATP binding"/>
    <property type="evidence" value="ECO:0007669"/>
    <property type="project" value="UniProtKB-UniRule"/>
</dbReference>
<dbReference type="GO" id="GO:0042450">
    <property type="term" value="P:arginine biosynthetic process via ornithine"/>
    <property type="evidence" value="ECO:0007669"/>
    <property type="project" value="UniProtKB-UniRule"/>
</dbReference>
<dbReference type="GO" id="GO:0006526">
    <property type="term" value="P:L-arginine biosynthetic process"/>
    <property type="evidence" value="ECO:0007669"/>
    <property type="project" value="UniProtKB-UniPathway"/>
</dbReference>
<dbReference type="CDD" id="cd04250">
    <property type="entry name" value="AAK_NAGK-C"/>
    <property type="match status" value="1"/>
</dbReference>
<dbReference type="FunFam" id="3.40.1160.10:FF:000004">
    <property type="entry name" value="Acetylglutamate kinase"/>
    <property type="match status" value="1"/>
</dbReference>
<dbReference type="Gene3D" id="3.40.1160.10">
    <property type="entry name" value="Acetylglutamate kinase-like"/>
    <property type="match status" value="1"/>
</dbReference>
<dbReference type="HAMAP" id="MF_00082">
    <property type="entry name" value="ArgB"/>
    <property type="match status" value="1"/>
</dbReference>
<dbReference type="InterPro" id="IPR036393">
    <property type="entry name" value="AceGlu_kinase-like_sf"/>
</dbReference>
<dbReference type="InterPro" id="IPR004662">
    <property type="entry name" value="AcgluKinase_fam"/>
</dbReference>
<dbReference type="InterPro" id="IPR037528">
    <property type="entry name" value="ArgB"/>
</dbReference>
<dbReference type="InterPro" id="IPR001048">
    <property type="entry name" value="Asp/Glu/Uridylate_kinase"/>
</dbReference>
<dbReference type="InterPro" id="IPR001057">
    <property type="entry name" value="Glu/AcGlu_kinase"/>
</dbReference>
<dbReference type="InterPro" id="IPR041727">
    <property type="entry name" value="NAGK-C"/>
</dbReference>
<dbReference type="NCBIfam" id="TIGR00761">
    <property type="entry name" value="argB"/>
    <property type="match status" value="1"/>
</dbReference>
<dbReference type="PANTHER" id="PTHR23342">
    <property type="entry name" value="N-ACETYLGLUTAMATE SYNTHASE"/>
    <property type="match status" value="1"/>
</dbReference>
<dbReference type="PANTHER" id="PTHR23342:SF0">
    <property type="entry name" value="N-ACETYLGLUTAMATE SYNTHASE, MITOCHONDRIAL"/>
    <property type="match status" value="1"/>
</dbReference>
<dbReference type="Pfam" id="PF00696">
    <property type="entry name" value="AA_kinase"/>
    <property type="match status" value="1"/>
</dbReference>
<dbReference type="PIRSF" id="PIRSF000728">
    <property type="entry name" value="NAGK"/>
    <property type="match status" value="1"/>
</dbReference>
<dbReference type="PRINTS" id="PR00474">
    <property type="entry name" value="GLU5KINASE"/>
</dbReference>
<dbReference type="SUPFAM" id="SSF53633">
    <property type="entry name" value="Carbamate kinase-like"/>
    <property type="match status" value="1"/>
</dbReference>
<gene>
    <name evidence="1" type="primary">argB</name>
    <name type="ordered locus">BLA_1247</name>
</gene>
<feature type="chain" id="PRO_1000118337" description="Acetylglutamate kinase">
    <location>
        <begin position="1"/>
        <end position="305"/>
    </location>
</feature>
<feature type="binding site" evidence="1">
    <location>
        <begin position="67"/>
        <end position="68"/>
    </location>
    <ligand>
        <name>substrate</name>
    </ligand>
</feature>
<feature type="binding site" evidence="1">
    <location>
        <position position="89"/>
    </location>
    <ligand>
        <name>substrate</name>
    </ligand>
</feature>
<feature type="binding site" evidence="1">
    <location>
        <position position="190"/>
    </location>
    <ligand>
        <name>substrate</name>
    </ligand>
</feature>
<feature type="site" description="Transition state stabilizer" evidence="1">
    <location>
        <position position="32"/>
    </location>
</feature>
<feature type="site" description="Transition state stabilizer" evidence="1">
    <location>
        <position position="251"/>
    </location>
</feature>
<comment type="function">
    <text evidence="1">Catalyzes the ATP-dependent phosphorylation of N-acetyl-L-glutamate.</text>
</comment>
<comment type="catalytic activity">
    <reaction evidence="1">
        <text>N-acetyl-L-glutamate + ATP = N-acetyl-L-glutamyl 5-phosphate + ADP</text>
        <dbReference type="Rhea" id="RHEA:14629"/>
        <dbReference type="ChEBI" id="CHEBI:30616"/>
        <dbReference type="ChEBI" id="CHEBI:44337"/>
        <dbReference type="ChEBI" id="CHEBI:57936"/>
        <dbReference type="ChEBI" id="CHEBI:456216"/>
        <dbReference type="EC" id="2.7.2.8"/>
    </reaction>
</comment>
<comment type="pathway">
    <text evidence="1">Amino-acid biosynthesis; L-arginine biosynthesis; N(2)-acetyl-L-ornithine from L-glutamate: step 2/4.</text>
</comment>
<comment type="subcellular location">
    <subcellularLocation>
        <location evidence="1">Cytoplasm</location>
    </subcellularLocation>
</comment>
<comment type="similarity">
    <text evidence="1">Belongs to the acetylglutamate kinase family. ArgB subfamily.</text>
</comment>
<protein>
    <recommendedName>
        <fullName evidence="1">Acetylglutamate kinase</fullName>
        <ecNumber evidence="1">2.7.2.8</ecNumber>
    </recommendedName>
    <alternativeName>
        <fullName evidence="1">N-acetyl-L-glutamate 5-phosphotransferase</fullName>
    </alternativeName>
    <alternativeName>
        <fullName evidence="1">NAG kinase</fullName>
        <shortName evidence="1">NAGK</shortName>
    </alternativeName>
</protein>
<accession>B8DU56</accession>
<keyword id="KW-0028">Amino-acid biosynthesis</keyword>
<keyword id="KW-0055">Arginine biosynthesis</keyword>
<keyword id="KW-0067">ATP-binding</keyword>
<keyword id="KW-0963">Cytoplasm</keyword>
<keyword id="KW-0418">Kinase</keyword>
<keyword id="KW-0547">Nucleotide-binding</keyword>
<keyword id="KW-1185">Reference proteome</keyword>
<keyword id="KW-0808">Transferase</keyword>
<sequence>MHTDLGPDQKAEVLIEALPWLEEFFGKTIVIKYGGNAMVNDHLKECFAEDMVFLRQVGIHPVVVHGGGPQISQMLKALGIHSEFKGGLRVTTPEAMDVVRMVLTGKVSRELVGLINAHGPLAVGLSGEDAALFSASQRKPIIDGEPTDIGLVGDVVGVDASAVVDLIHAGRIPVVSSVAPNEDDATEVLNVNADSAAAALASALGAHKLVILTDVDGLYADWPDKNSLVGRIGVEDLRDLLPELESGMRPKMEACVRAIDGGVQQAHIIDGRKPHSILNEIFTTAGVGTMVEPGEGMELRSSYDL</sequence>
<reference key="1">
    <citation type="journal article" date="2009" name="J. Bacteriol.">
        <title>Genome sequence of the probiotic bacterium Bifidobacterium animalis subsp. lactis AD011.</title>
        <authorList>
            <person name="Kim J.F."/>
            <person name="Jeong H."/>
            <person name="Yu D.S."/>
            <person name="Choi S.-H."/>
            <person name="Hur C.-G."/>
            <person name="Park M.-S."/>
            <person name="Yoon S.H."/>
            <person name="Kim D.-W."/>
            <person name="Ji G.E."/>
            <person name="Park H.-S."/>
            <person name="Oh T.K."/>
        </authorList>
    </citation>
    <scope>NUCLEOTIDE SEQUENCE [LARGE SCALE GENOMIC DNA]</scope>
    <source>
        <strain>AD011</strain>
    </source>
</reference>
<organism>
    <name type="scientific">Bifidobacterium animalis subsp. lactis (strain AD011)</name>
    <dbReference type="NCBI Taxonomy" id="442563"/>
    <lineage>
        <taxon>Bacteria</taxon>
        <taxon>Bacillati</taxon>
        <taxon>Actinomycetota</taxon>
        <taxon>Actinomycetes</taxon>
        <taxon>Bifidobacteriales</taxon>
        <taxon>Bifidobacteriaceae</taxon>
        <taxon>Bifidobacterium</taxon>
    </lineage>
</organism>